<evidence type="ECO:0000305" key="1"/>
<reference key="1">
    <citation type="journal article" date="2002" name="J. Gen. Virol.">
        <title>The sequence of camelpox virus shows it is most closely related to variola virus, the cause of smallpox.</title>
        <authorList>
            <person name="Gubser C."/>
            <person name="Smith G.L."/>
        </authorList>
    </citation>
    <scope>NUCLEOTIDE SEQUENCE [LARGE SCALE GENOMIC DNA]</scope>
</reference>
<protein>
    <recommendedName>
        <fullName>Thymidylate kinase</fullName>
        <ecNumber>2.7.4.9</ecNumber>
    </recommendedName>
    <alternativeName>
        <fullName>dTMP kinase</fullName>
    </alternativeName>
</protein>
<organism>
    <name type="scientific">Camelpox virus (strain CMS)</name>
    <dbReference type="NCBI Taxonomy" id="203172"/>
    <lineage>
        <taxon>Viruses</taxon>
        <taxon>Varidnaviria</taxon>
        <taxon>Bamfordvirae</taxon>
        <taxon>Nucleocytoviricota</taxon>
        <taxon>Pokkesviricetes</taxon>
        <taxon>Chitovirales</taxon>
        <taxon>Poxviridae</taxon>
        <taxon>Chordopoxvirinae</taxon>
        <taxon>Orthopoxvirus</taxon>
        <taxon>Camelpox virus</taxon>
    </lineage>
</organism>
<keyword id="KW-0067">ATP-binding</keyword>
<keyword id="KW-0418">Kinase</keyword>
<keyword id="KW-0545">Nucleotide biosynthesis</keyword>
<keyword id="KW-0547">Nucleotide-binding</keyword>
<keyword id="KW-1185">Reference proteome</keyword>
<keyword id="KW-0808">Transferase</keyword>
<dbReference type="EC" id="2.7.4.9"/>
<dbReference type="EMBL" id="AY009089">
    <property type="protein sequence ID" value="AAG37665.1"/>
    <property type="molecule type" value="Genomic_DNA"/>
</dbReference>
<dbReference type="SMR" id="Q8QQ21"/>
<dbReference type="UniPathway" id="UPA00575"/>
<dbReference type="Proteomes" id="UP000107153">
    <property type="component" value="Genome"/>
</dbReference>
<dbReference type="GO" id="GO:0005524">
    <property type="term" value="F:ATP binding"/>
    <property type="evidence" value="ECO:0007669"/>
    <property type="project" value="UniProtKB-KW"/>
</dbReference>
<dbReference type="GO" id="GO:0004798">
    <property type="term" value="F:dTMP kinase activity"/>
    <property type="evidence" value="ECO:0007669"/>
    <property type="project" value="UniProtKB-EC"/>
</dbReference>
<dbReference type="GO" id="GO:0004550">
    <property type="term" value="F:nucleoside diphosphate kinase activity"/>
    <property type="evidence" value="ECO:0007669"/>
    <property type="project" value="TreeGrafter"/>
</dbReference>
<dbReference type="GO" id="GO:0006233">
    <property type="term" value="P:dTDP biosynthetic process"/>
    <property type="evidence" value="ECO:0007669"/>
    <property type="project" value="InterPro"/>
</dbReference>
<dbReference type="GO" id="GO:0006235">
    <property type="term" value="P:dTTP biosynthetic process"/>
    <property type="evidence" value="ECO:0007669"/>
    <property type="project" value="UniProtKB-UniPathway"/>
</dbReference>
<dbReference type="GO" id="GO:0006227">
    <property type="term" value="P:dUDP biosynthetic process"/>
    <property type="evidence" value="ECO:0007669"/>
    <property type="project" value="TreeGrafter"/>
</dbReference>
<dbReference type="Gene3D" id="3.40.50.300">
    <property type="entry name" value="P-loop containing nucleotide triphosphate hydrolases"/>
    <property type="match status" value="1"/>
</dbReference>
<dbReference type="InterPro" id="IPR027417">
    <property type="entry name" value="P-loop_NTPase"/>
</dbReference>
<dbReference type="InterPro" id="IPR039430">
    <property type="entry name" value="Thymidylate_kin-like_dom"/>
</dbReference>
<dbReference type="InterPro" id="IPR018095">
    <property type="entry name" value="Thymidylate_kin_CS"/>
</dbReference>
<dbReference type="InterPro" id="IPR018094">
    <property type="entry name" value="Thymidylate_kinase"/>
</dbReference>
<dbReference type="NCBIfam" id="TIGR00041">
    <property type="entry name" value="DTMP_kinase"/>
    <property type="match status" value="1"/>
</dbReference>
<dbReference type="PANTHER" id="PTHR10344">
    <property type="entry name" value="THYMIDYLATE KINASE"/>
    <property type="match status" value="1"/>
</dbReference>
<dbReference type="PANTHER" id="PTHR10344:SF1">
    <property type="entry name" value="THYMIDYLATE KINASE"/>
    <property type="match status" value="1"/>
</dbReference>
<dbReference type="Pfam" id="PF02223">
    <property type="entry name" value="Thymidylate_kin"/>
    <property type="match status" value="1"/>
</dbReference>
<dbReference type="SUPFAM" id="SSF52540">
    <property type="entry name" value="P-loop containing nucleoside triphosphate hydrolases"/>
    <property type="match status" value="1"/>
</dbReference>
<dbReference type="PROSITE" id="PS01331">
    <property type="entry name" value="THYMIDYLATE_KINASE"/>
    <property type="match status" value="1"/>
</dbReference>
<comment type="catalytic activity">
    <reaction>
        <text>dTMP + ATP = dTDP + ADP</text>
        <dbReference type="Rhea" id="RHEA:13517"/>
        <dbReference type="ChEBI" id="CHEBI:30616"/>
        <dbReference type="ChEBI" id="CHEBI:58369"/>
        <dbReference type="ChEBI" id="CHEBI:63528"/>
        <dbReference type="ChEBI" id="CHEBI:456216"/>
        <dbReference type="EC" id="2.7.4.9"/>
    </reaction>
</comment>
<comment type="pathway">
    <text>Pyrimidine metabolism; dTTP biosynthesis.</text>
</comment>
<comment type="similarity">
    <text evidence="1">Belongs to the thymidylate kinase family.</text>
</comment>
<proteinExistence type="inferred from homology"/>
<organismHost>
    <name type="scientific">Camelus</name>
    <dbReference type="NCBI Taxonomy" id="9836"/>
</organismHost>
<gene>
    <name type="primary">TMK</name>
    <name type="ordered locus">CMP166R</name>
</gene>
<name>KTHY_CAMPS</name>
<sequence>MSRGALIVFEGLDKSGKTTQCMNIMESILANTIKYLNFPQRSTVTGKMIDDYLTRKKTYNDHIVNLLFCANRWEFASFIQEQLEQGITLIVDRYAFSGVAYAAAKGASMTLSKSYEFGLPKPDLVIFLESGSKEINKNVGEEIYEDVAFQQKVLQEYKKMIEEGDIHWQIISSEFEEDVKKELIKNIVIEAIHTVTGPVGQLWM</sequence>
<accession>Q8QQ21</accession>
<feature type="chain" id="PRO_0000155222" description="Thymidylate kinase">
    <location>
        <begin position="1"/>
        <end position="204"/>
    </location>
</feature>
<feature type="binding site" evidence="1">
    <location>
        <begin position="11"/>
        <end position="18"/>
    </location>
    <ligand>
        <name>ATP</name>
        <dbReference type="ChEBI" id="CHEBI:30616"/>
    </ligand>
</feature>